<organism>
    <name type="scientific">Rotavirus A (strain RVA/Human/Venezuela/M37/1982/G1P2A[6])</name>
    <name type="common">RV-A</name>
    <dbReference type="NCBI Taxonomy" id="10954"/>
    <lineage>
        <taxon>Viruses</taxon>
        <taxon>Riboviria</taxon>
        <taxon>Orthornavirae</taxon>
        <taxon>Duplornaviricota</taxon>
        <taxon>Resentoviricetes</taxon>
        <taxon>Reovirales</taxon>
        <taxon>Sedoreoviridae</taxon>
        <taxon>Rotavirus</taxon>
        <taxon>Rotavirus A</taxon>
    </lineage>
</organism>
<comment type="function">
    <molecule>Outer capsid protein VP4</molecule>
    <text evidence="1">Spike-forming protein that mediates virion attachment to the host epithelial cell receptors and plays a major role in cell penetration, determination of host range restriction and virulence. Rotavirus attachment and entry into the host cell probably involves multiple sequential contacts between the outer capsid proteins VP4 and VP7, and the cell receptors. It is subsequently lost, together with VP7, following virus entry into the host cell. Following entry into the host cell, low intracellular or intravesicular Ca(2+) concentration probably causes the calcium-stabilized VP7 trimers to dissociate from the virion. This step is probably necessary for the membrane-disrupting entry step and the release of VP4, which is locked onto the virion by VP7. During the virus exit from the host cell, VP4 seems to be required to target the newly formed virions to the host cell lipid rafts.</text>
</comment>
<comment type="function">
    <molecule>Outer capsid protein VP5*</molecule>
    <text evidence="1">Forms the spike 'foot' and 'body' and acts as a membrane permeabilization protein that mediates release of viral particles from endosomal compartments into the cytoplasm. During entry, the part of VP5* that protrudes from the virus folds back on itself and reorganizes from a local dimer to a trimer. This reorganization may be linked to membrane penetration by exposing VP5* hydrophobic region. In integrin-dependent strains, VP5* targets the integrin heterodimer ITGA2/ITGB1 for cell attachment.</text>
</comment>
<comment type="function">
    <molecule>Outer capsid protein VP8*</molecule>
    <text evidence="1">Forms the head of the spikes and mediates the recognition of specific host cell surface glycans. It is the viral hemagglutinin and an important target of neutralizing antibodies. In sialic acid-dependent strains, VP8* binds to host cell sialic acid, most probably a ganglioside, providing the initial contact. In some other strains, VP8* mediates the attachment to histo-blood group antigens (HBGAs) for viral entry.</text>
</comment>
<comment type="subunit">
    <molecule>Outer capsid protein VP4</molecule>
    <text evidence="4">Homotrimer. VP4 adopts a dimeric appearance above the capsid surface, while forming a trimeric base anchored inside the capsid layer. Only hints of the third molecule are observed above the capsid surface. It probably performs a series of molecular rearrangements during viral entry. Prior to trypsin cleavage, it is flexible. The priming trypsin cleavage triggers its rearrangement into rigid spikes with approximate two-fold symmetry of their protruding parts. After an unknown second triggering event, cleaved VP4 may undergo another rearrangement, in which two VP5* subunits fold back on themselves and join a third subunit to form a tightly associated trimer, shaped like a folded umbrella. Interacts with VP6. Interacts with VP7.</text>
</comment>
<comment type="subunit">
    <molecule>Outer capsid protein VP5*</molecule>
    <text evidence="4">Homotrimer. The trimer is coiled-coil stabilized by its C-terminus, however, its N-terminus, known as antigen domain or 'body', seems to be flexible allowing it to self-associate either as a dimer or a trimer.</text>
</comment>
<comment type="subcellular location">
    <molecule>Outer capsid protein VP4</molecule>
    <subcellularLocation>
        <location evidence="1">Virion</location>
    </subcellularLocation>
    <subcellularLocation>
        <location evidence="1">Host rough endoplasmic reticulum</location>
    </subcellularLocation>
    <subcellularLocation>
        <location evidence="1">Host cell membrane</location>
    </subcellularLocation>
    <subcellularLocation>
        <location evidence="1">Host cytoplasm</location>
        <location evidence="1">Host cytoskeleton</location>
    </subcellularLocation>
    <subcellularLocation>
        <location evidence="1">Host endoplasmic reticulum-Golgi intermediate compartment</location>
    </subcellularLocation>
    <text evidence="1">The outer layer contains 180 copies of VP4, grouped as 60 dimers. Immature double-layered particles assembled in the cytoplasm bud across the membrane of the endoplasmic reticulum, acquiring during this process a transient lipid membrane that is modified with the ER resident viral glycoproteins NSP4 and VP7; these enveloped particles also contain VP4. As the particles move towards the interior of the ER cisternae, the transient lipid membrane and the non-structural protein NSP4 are lost, while the virus surface proteins VP4 and VP7 rearrange to form the outermost virus protein layer, yielding mature infectious triple-layered particles. VP4 also seems to associate with lipid rafts of the host cell membrane probably for the exit of the virus from the infected cell by an alternate pathway.</text>
</comment>
<comment type="subcellular location">
    <molecule>Outer capsid protein VP8*</molecule>
    <subcellularLocation>
        <location evidence="1">Virion</location>
    </subcellularLocation>
    <text evidence="1">Outer capsid protein.</text>
</comment>
<comment type="subcellular location">
    <molecule>Outer capsid protein VP5*</molecule>
    <subcellularLocation>
        <location evidence="1">Virion</location>
    </subcellularLocation>
    <text evidence="1">Outer capsid protein.</text>
</comment>
<comment type="domain">
    <molecule>Outer capsid protein VP4</molecule>
    <text evidence="1">The VP4 spike is divided into a foot, a stalk and body, and a head.</text>
</comment>
<comment type="PTM">
    <molecule>Outer capsid protein VP4</molecule>
    <text evidence="1">Proteolytic cleavage by trypsin results in activation of VP4 functions and greatly increases infectivity. The penetration into the host cell is dependent on trypsin treatment of VP4. It produces two peptides, VP5* and VP8* that remain associated with the virion. Cleavage of VP4 by trypsin probably occurs in vivo in the lumen of the intestine prior to infection of enterocytes. Trypsin seems to be incorporated into the three-layered viral particles but remains inactive as long as the viral outer capsid is intact and would only be activated upon the solubilization of the latter.</text>
</comment>
<comment type="miscellaneous">
    <text evidence="2 3">This strain probably does not use sialic acid to attach to the host cell.</text>
</comment>
<comment type="miscellaneous">
    <text evidence="1">In group A rotaviruses, VP4 defines the P serotype.</text>
</comment>
<comment type="miscellaneous">
    <text evidence="1">Some rotavirus strains are neuraminidase-sensitive and require sialic acid to attach to the cell surface. Some rotavirus strains are integrin-dependent. Some rotavirus strains depend on ganglioside for their entry into the host cell. Hsp70 also seems to be involved in the entry of some strains.</text>
</comment>
<comment type="similarity">
    <text evidence="1">Belongs to the rotavirus VP4 family.</text>
</comment>
<dbReference type="EMBL" id="L20877">
    <property type="protein sequence ID" value="AAA57560.1"/>
    <property type="molecule type" value="mRNA"/>
</dbReference>
<dbReference type="PIR" id="E28839">
    <property type="entry name" value="VPXRW7"/>
</dbReference>
<dbReference type="SMR" id="P11197"/>
<dbReference type="GO" id="GO:0044172">
    <property type="term" value="C:host cell endoplasmic reticulum-Golgi intermediate compartment"/>
    <property type="evidence" value="ECO:0007669"/>
    <property type="project" value="UniProtKB-SubCell"/>
</dbReference>
<dbReference type="GO" id="GO:0020002">
    <property type="term" value="C:host cell plasma membrane"/>
    <property type="evidence" value="ECO:0007669"/>
    <property type="project" value="UniProtKB-SubCell"/>
</dbReference>
<dbReference type="GO" id="GO:0044168">
    <property type="term" value="C:host cell rough endoplasmic reticulum"/>
    <property type="evidence" value="ECO:0007669"/>
    <property type="project" value="UniProtKB-SubCell"/>
</dbReference>
<dbReference type="GO" id="GO:0044163">
    <property type="term" value="C:host cytoskeleton"/>
    <property type="evidence" value="ECO:0007669"/>
    <property type="project" value="UniProtKB-SubCell"/>
</dbReference>
<dbReference type="GO" id="GO:0016020">
    <property type="term" value="C:membrane"/>
    <property type="evidence" value="ECO:0007669"/>
    <property type="project" value="UniProtKB-KW"/>
</dbReference>
<dbReference type="GO" id="GO:0039624">
    <property type="term" value="C:viral outer capsid"/>
    <property type="evidence" value="ECO:0007669"/>
    <property type="project" value="UniProtKB-UniRule"/>
</dbReference>
<dbReference type="GO" id="GO:0039665">
    <property type="term" value="P:permeabilization of host organelle membrane involved in viral entry into host cell"/>
    <property type="evidence" value="ECO:0007669"/>
    <property type="project" value="UniProtKB-UniRule"/>
</dbReference>
<dbReference type="GO" id="GO:0019062">
    <property type="term" value="P:virion attachment to host cell"/>
    <property type="evidence" value="ECO:0007669"/>
    <property type="project" value="UniProtKB-UniRule"/>
</dbReference>
<dbReference type="Gene3D" id="1.20.5.170">
    <property type="match status" value="1"/>
</dbReference>
<dbReference type="Gene3D" id="2.60.120.200">
    <property type="match status" value="1"/>
</dbReference>
<dbReference type="HAMAP" id="MF_04132">
    <property type="entry name" value="Rota_A_VP4"/>
    <property type="match status" value="1"/>
</dbReference>
<dbReference type="HAMAP" id="MF_04125">
    <property type="entry name" value="Rota_VP4"/>
    <property type="match status" value="1"/>
</dbReference>
<dbReference type="InterPro" id="IPR013320">
    <property type="entry name" value="ConA-like_dom_sf"/>
</dbReference>
<dbReference type="InterPro" id="IPR042546">
    <property type="entry name" value="Rota_A_VP4"/>
</dbReference>
<dbReference type="InterPro" id="IPR035330">
    <property type="entry name" value="Rota_VP4_MID"/>
</dbReference>
<dbReference type="InterPro" id="IPR038017">
    <property type="entry name" value="Rota_VP4_MID_sf"/>
</dbReference>
<dbReference type="InterPro" id="IPR000416">
    <property type="entry name" value="VP4_concanavalin-like"/>
</dbReference>
<dbReference type="InterPro" id="IPR035329">
    <property type="entry name" value="VP4_helical"/>
</dbReference>
<dbReference type="Pfam" id="PF17477">
    <property type="entry name" value="Rota_VP4_MID"/>
    <property type="match status" value="1"/>
</dbReference>
<dbReference type="Pfam" id="PF00426">
    <property type="entry name" value="VP4_haemagglut"/>
    <property type="match status" value="1"/>
</dbReference>
<dbReference type="Pfam" id="PF17478">
    <property type="entry name" value="VP4_helical"/>
    <property type="match status" value="1"/>
</dbReference>
<dbReference type="SUPFAM" id="SSF49899">
    <property type="entry name" value="Concanavalin A-like lectins/glucanases"/>
    <property type="match status" value="1"/>
</dbReference>
<dbReference type="SUPFAM" id="SSF111379">
    <property type="entry name" value="VP4 membrane interaction domain"/>
    <property type="match status" value="1"/>
</dbReference>
<keyword id="KW-0167">Capsid protein</keyword>
<keyword id="KW-0175">Coiled coil</keyword>
<keyword id="KW-1015">Disulfide bond</keyword>
<keyword id="KW-0348">Hemagglutinin</keyword>
<keyword id="KW-1032">Host cell membrane</keyword>
<keyword id="KW-1035">Host cytoplasm</keyword>
<keyword id="KW-1037">Host cytoskeleton</keyword>
<keyword id="KW-1038">Host endoplasmic reticulum</keyword>
<keyword id="KW-1043">Host membrane</keyword>
<keyword id="KW-0945">Host-virus interaction</keyword>
<keyword id="KW-0472">Membrane</keyword>
<keyword id="KW-1152">Outer capsid protein</keyword>
<keyword id="KW-1161">Viral attachment to host cell</keyword>
<keyword id="KW-1162">Viral penetration into host cytoplasm</keyword>
<keyword id="KW-1173">Viral penetration via permeabilization of host membrane</keyword>
<keyword id="KW-0946">Virion</keyword>
<keyword id="KW-1160">Virus entry into host cell</keyword>
<sequence>MASLIYRQLLTNSYSVELSDEINTIGSEKTQNVTINPGPFAQTNYAPVVLESWEVNDSTTIEPVLDGPYQPTSFKPPSDYWILLNPTDQQVVLEGTNKTDIWIALLLVEPNVTNQSRQYTLFGETKQITVENNTNKWKFFEMFRKNVSAEFQHKRTLTSDTKLAGFLKHYNSVWTFHGETPHATTDYSSTSNLSEVETVIHVEFYIIPRSQESKCVEYINTGLPPMQNTRNIVPVALSSRSVTYQRAQVNEDIIISKTSLWKEMQCNRDIIIRFKFNNSIVKLGGLGYKWSEISFKAANYQYNYLRDGEQVTAHTTCSVNGVNNFSYNGGSLPTDFSVSRYEVIKENSYVYVDYWDDSQAFRNMVYVRSLAANLNSVKCSGGNYNFQLPVGAWPVMSGGAVSLHFAGVTLSTQFTDFVSLNSLRFRFSLTVEEPPFSILRTRVSGLYGLPAFNPNSGHEYYEIAGRFSLISLVPSNDDYQTPIMNSVTVRQDLERQLGDLREEFNSLSQEIAMTQLIDLALLPLDMFSMFSGIKSTIDAAKSMATKVMKKFKRSGLATSISELTGSLSNAASSISRSSSIRSNISSISVWTDVSEQIAGSSDSVSNISTQMSAISRRLRLREITTQTEGMNFDDISAAVLKTKIDRSTHISPDTLPDIMTESSKKFIPKRAYRVLKDDEVMEADVDGKFFAYKVDTFEEVPFDVDKFVDLVTDSPVISAIIDFKTLKNLNDNYGITRSQALDLIRSDPRVLRDFINQNNPIIKNRIEQLILQCRL</sequence>
<accession>P11197</accession>
<accession>Q86221</accession>
<evidence type="ECO:0000255" key="1">
    <source>
        <dbReference type="HAMAP-Rule" id="MF_04132"/>
    </source>
</evidence>
<evidence type="ECO:0000269" key="2">
    <source>
    </source>
</evidence>
<evidence type="ECO:0000303" key="3">
    <source>
    </source>
</evidence>
<evidence type="ECO:0000305" key="4"/>
<name>VP4_ROTHM</name>
<reference key="1">
    <citation type="journal article" date="1988" name="J. Virol.">
        <title>Sequence of the fourth gene of human rotaviruses recovered from asymptomatic or symptomatic infections.</title>
        <authorList>
            <person name="Gorziglia M."/>
            <person name="Green K.Y."/>
            <person name="Nishikawa K."/>
            <person name="Taniguchi K."/>
            <person name="Jones R.W."/>
            <person name="Kapikian A.Z."/>
            <person name="Chanock R.M."/>
        </authorList>
    </citation>
    <scope>NUCLEOTIDE SEQUENCE [GENOMIC RNA]</scope>
</reference>
<reference key="2">
    <citation type="journal article" date="1994" name="Virology">
        <title>Identification of a new VP4 serotype of human rotaviruses.</title>
        <authorList>
            <person name="Gerna G."/>
            <person name="Sears J."/>
            <person name="Hoshino Y."/>
            <person name="Steele A.D."/>
            <person name="Nakagomi O."/>
            <person name="Sarasini A."/>
            <person name="Flores J."/>
        </authorList>
    </citation>
    <scope>NUCLEOTIDE SEQUENCE [MRNA]</scope>
</reference>
<reference key="3">
    <citation type="journal article" date="1986" name="Proc. Natl. Acad. Sci. U.S.A.">
        <title>Conservation of amino acid sequence of VP8 and cleavage region of 84-kDa outer capsid protein among rotaviruses recovered from asymptomatic neonatal infection.</title>
        <authorList>
            <person name="Gorziglia M."/>
            <person name="Hoshino Y."/>
            <person name="Buckler-White A."/>
            <person name="Blumentals I."/>
            <person name="Glass R."/>
            <person name="Flores J."/>
            <person name="Kapikian A.Z."/>
            <person name="Chanock R.M."/>
        </authorList>
    </citation>
    <scope>NUCLEOTIDE SEQUENCE [GENOMIC RNA] OF 1-280</scope>
</reference>
<reference key="4">
    <citation type="journal article" date="2002" name="J. Virol.">
        <title>Initial interaction of rotavirus strains with N-acetylneuraminic (sialic) acid residues on the cell surface correlates with VP4 genotype, not species of origin.</title>
        <authorList>
            <person name="Ciarlet M."/>
            <person name="Ludert J.E."/>
            <person name="Iturriza-Gomara M."/>
            <person name="Liprandi F."/>
            <person name="Gray J.J."/>
            <person name="Desselberger U."/>
            <person name="Estes M.K."/>
        </authorList>
    </citation>
    <scope>SIALIC ACID INDEPENDENCY</scope>
</reference>
<reference key="5">
    <citation type="journal article" date="2006" name="Glycoconj. J.">
        <title>Role of sialic acids in rotavirus infection.</title>
        <authorList>
            <person name="Isa P."/>
            <person name="Arias C.F."/>
            <person name="Lopez S."/>
        </authorList>
    </citation>
    <scope>REVIEW</scope>
</reference>
<proteinExistence type="evidence at transcript level"/>
<feature type="chain" id="PRO_0000041066" description="Outer capsid protein VP4" evidence="1">
    <location>
        <begin position="1"/>
        <end position="775"/>
    </location>
</feature>
<feature type="chain" id="PRO_0000041067" description="Outer capsid protein VP8*" evidence="1">
    <location>
        <begin position="1"/>
        <end position="230"/>
    </location>
</feature>
<feature type="chain" id="PRO_0000041068" description="Outer capsid protein VP5*" evidence="1">
    <location>
        <begin position="247"/>
        <end position="775"/>
    </location>
</feature>
<feature type="region of interest" description="Spike head" evidence="1">
    <location>
        <begin position="65"/>
        <end position="223"/>
    </location>
</feature>
<feature type="region of interest" description="Spike body and stalk (antigen domain)" evidence="1">
    <location>
        <begin position="247"/>
        <end position="478"/>
    </location>
</feature>
<feature type="region of interest" description="Hydrophobic; possible role in virus entry into host cell" evidence="1">
    <location>
        <begin position="388"/>
        <end position="408"/>
    </location>
</feature>
<feature type="region of interest" description="Spike foot" evidence="1">
    <location>
        <begin position="509"/>
        <end position="775"/>
    </location>
</feature>
<feature type="coiled-coil region" evidence="1">
    <location>
        <begin position="483"/>
        <end position="515"/>
    </location>
</feature>
<feature type="short sequence motif" description="DGE motif; interaction with ITGA2/ITGB1 heterodimer" evidence="1">
    <location>
        <begin position="307"/>
        <end position="309"/>
    </location>
</feature>
<feature type="short sequence motif" description="YGL motif; interaction with ITGA4" evidence="1">
    <location>
        <begin position="447"/>
        <end position="449"/>
    </location>
</feature>
<feature type="short sequence motif" description="KID motif; interaction with HSPA8" evidence="1">
    <location>
        <begin position="643"/>
        <end position="645"/>
    </location>
</feature>
<feature type="site" description="Cleavage" evidence="1">
    <location>
        <begin position="230"/>
        <end position="231"/>
    </location>
</feature>
<feature type="site" description="Cleavage" evidence="1">
    <location>
        <begin position="240"/>
        <end position="241"/>
    </location>
</feature>
<feature type="site" description="Cleavage; associated with enhancement of infectivity" evidence="1">
    <location>
        <begin position="246"/>
        <end position="247"/>
    </location>
</feature>
<feature type="disulfide bond" evidence="1">
    <location>
        <begin position="317"/>
        <end position="379"/>
    </location>
</feature>
<feature type="sequence conflict" description="In Ref. 2; AAA57560." evidence="4" ref="2">
    <original>S</original>
    <variation>T</variation>
    <location>
        <position position="15"/>
    </location>
</feature>
<feature type="sequence conflict" description="In Ref. 2; AAA57560." evidence="4" ref="2">
    <original>VLESW</original>
    <variation>TWSHG</variation>
    <location>
        <begin position="49"/>
        <end position="53"/>
    </location>
</feature>
<feature type="sequence conflict" description="In Ref. 2; AAA57560." evidence="4" ref="2">
    <original>C</original>
    <variation>Y</variation>
    <location>
        <position position="266"/>
    </location>
</feature>
<feature type="sequence conflict" description="In Ref. 2; AAA57560." evidence="4" ref="2">
    <original>K</original>
    <variation>E</variation>
    <location>
        <position position="664"/>
    </location>
</feature>
<organismHost>
    <name type="scientific">Homo sapiens</name>
    <name type="common">Human</name>
    <dbReference type="NCBI Taxonomy" id="9606"/>
</organismHost>
<protein>
    <recommendedName>
        <fullName evidence="1">Outer capsid protein VP4</fullName>
    </recommendedName>
    <alternativeName>
        <fullName evidence="1">Hemagglutinin</fullName>
    </alternativeName>
    <component>
        <recommendedName>
            <fullName evidence="1">Outer capsid protein VP8*</fullName>
        </recommendedName>
    </component>
    <component>
        <recommendedName>
            <fullName evidence="1">Outer capsid protein VP5*</fullName>
        </recommendedName>
    </component>
</protein>